<feature type="chain" id="PRO_0000364778" description="Ferredoxin--NADP reductase">
    <location>
        <begin position="1"/>
        <end position="339"/>
    </location>
</feature>
<feature type="binding site" evidence="1">
    <location>
        <position position="36"/>
    </location>
    <ligand>
        <name>FAD</name>
        <dbReference type="ChEBI" id="CHEBI:57692"/>
    </ligand>
</feature>
<feature type="binding site" evidence="1">
    <location>
        <position position="44"/>
    </location>
    <ligand>
        <name>FAD</name>
        <dbReference type="ChEBI" id="CHEBI:57692"/>
    </ligand>
</feature>
<feature type="binding site" evidence="1">
    <location>
        <position position="49"/>
    </location>
    <ligand>
        <name>FAD</name>
        <dbReference type="ChEBI" id="CHEBI:57692"/>
    </ligand>
</feature>
<feature type="binding site" evidence="1">
    <location>
        <position position="89"/>
    </location>
    <ligand>
        <name>FAD</name>
        <dbReference type="ChEBI" id="CHEBI:57692"/>
    </ligand>
</feature>
<feature type="binding site" evidence="1">
    <location>
        <position position="123"/>
    </location>
    <ligand>
        <name>FAD</name>
        <dbReference type="ChEBI" id="CHEBI:57692"/>
    </ligand>
</feature>
<feature type="binding site" evidence="1">
    <location>
        <position position="290"/>
    </location>
    <ligand>
        <name>FAD</name>
        <dbReference type="ChEBI" id="CHEBI:57692"/>
    </ligand>
</feature>
<feature type="binding site" evidence="1">
    <location>
        <position position="331"/>
    </location>
    <ligand>
        <name>FAD</name>
        <dbReference type="ChEBI" id="CHEBI:57692"/>
    </ligand>
</feature>
<gene>
    <name type="ordered locus">Acry_1452</name>
</gene>
<keyword id="KW-0274">FAD</keyword>
<keyword id="KW-0285">Flavoprotein</keyword>
<keyword id="KW-0521">NADP</keyword>
<keyword id="KW-0560">Oxidoreductase</keyword>
<keyword id="KW-1185">Reference proteome</keyword>
<dbReference type="EC" id="1.18.1.2" evidence="1"/>
<dbReference type="EMBL" id="CP000697">
    <property type="protein sequence ID" value="ABQ30660.1"/>
    <property type="molecule type" value="Genomic_DNA"/>
</dbReference>
<dbReference type="RefSeq" id="WP_007421889.1">
    <property type="nucleotide sequence ID" value="NC_009484.1"/>
</dbReference>
<dbReference type="SMR" id="A5FYH8"/>
<dbReference type="STRING" id="349163.Acry_1452"/>
<dbReference type="KEGG" id="acr:Acry_1452"/>
<dbReference type="eggNOG" id="COG0492">
    <property type="taxonomic scope" value="Bacteria"/>
</dbReference>
<dbReference type="HOGENOM" id="CLU_031864_5_5_5"/>
<dbReference type="Proteomes" id="UP000000245">
    <property type="component" value="Chromosome"/>
</dbReference>
<dbReference type="GO" id="GO:0004324">
    <property type="term" value="F:ferredoxin-NADP+ reductase activity"/>
    <property type="evidence" value="ECO:0007669"/>
    <property type="project" value="UniProtKB-UniRule"/>
</dbReference>
<dbReference type="GO" id="GO:0050660">
    <property type="term" value="F:flavin adenine dinucleotide binding"/>
    <property type="evidence" value="ECO:0007669"/>
    <property type="project" value="UniProtKB-UniRule"/>
</dbReference>
<dbReference type="GO" id="GO:0050661">
    <property type="term" value="F:NADP binding"/>
    <property type="evidence" value="ECO:0007669"/>
    <property type="project" value="UniProtKB-UniRule"/>
</dbReference>
<dbReference type="Gene3D" id="3.50.50.60">
    <property type="entry name" value="FAD/NAD(P)-binding domain"/>
    <property type="match status" value="2"/>
</dbReference>
<dbReference type="HAMAP" id="MF_01685">
    <property type="entry name" value="FENR2"/>
    <property type="match status" value="1"/>
</dbReference>
<dbReference type="InterPro" id="IPR036188">
    <property type="entry name" value="FAD/NAD-bd_sf"/>
</dbReference>
<dbReference type="InterPro" id="IPR023753">
    <property type="entry name" value="FAD/NAD-binding_dom"/>
</dbReference>
<dbReference type="InterPro" id="IPR022890">
    <property type="entry name" value="Fd--NADP_Rdtase_type_2"/>
</dbReference>
<dbReference type="InterPro" id="IPR050097">
    <property type="entry name" value="Ferredoxin-NADP_redctase_2"/>
</dbReference>
<dbReference type="PANTHER" id="PTHR48105">
    <property type="entry name" value="THIOREDOXIN REDUCTASE 1-RELATED-RELATED"/>
    <property type="match status" value="1"/>
</dbReference>
<dbReference type="Pfam" id="PF07992">
    <property type="entry name" value="Pyr_redox_2"/>
    <property type="match status" value="1"/>
</dbReference>
<dbReference type="PRINTS" id="PR00368">
    <property type="entry name" value="FADPNR"/>
</dbReference>
<dbReference type="PRINTS" id="PR00469">
    <property type="entry name" value="PNDRDTASEII"/>
</dbReference>
<dbReference type="SUPFAM" id="SSF51905">
    <property type="entry name" value="FAD/NAD(P)-binding domain"/>
    <property type="match status" value="1"/>
</dbReference>
<comment type="catalytic activity">
    <reaction evidence="1">
        <text>2 reduced [2Fe-2S]-[ferredoxin] + NADP(+) + H(+) = 2 oxidized [2Fe-2S]-[ferredoxin] + NADPH</text>
        <dbReference type="Rhea" id="RHEA:20125"/>
        <dbReference type="Rhea" id="RHEA-COMP:10000"/>
        <dbReference type="Rhea" id="RHEA-COMP:10001"/>
        <dbReference type="ChEBI" id="CHEBI:15378"/>
        <dbReference type="ChEBI" id="CHEBI:33737"/>
        <dbReference type="ChEBI" id="CHEBI:33738"/>
        <dbReference type="ChEBI" id="CHEBI:57783"/>
        <dbReference type="ChEBI" id="CHEBI:58349"/>
        <dbReference type="EC" id="1.18.1.2"/>
    </reaction>
</comment>
<comment type="cofactor">
    <cofactor evidence="1">
        <name>FAD</name>
        <dbReference type="ChEBI" id="CHEBI:57692"/>
    </cofactor>
    <text evidence="1">Binds 1 FAD per subunit.</text>
</comment>
<comment type="subunit">
    <text evidence="1">Homodimer.</text>
</comment>
<comment type="similarity">
    <text evidence="1">Belongs to the ferredoxin--NADP reductase type 2 family.</text>
</comment>
<proteinExistence type="inferred from homology"/>
<organism>
    <name type="scientific">Acidiphilium cryptum (strain JF-5)</name>
    <dbReference type="NCBI Taxonomy" id="349163"/>
    <lineage>
        <taxon>Bacteria</taxon>
        <taxon>Pseudomonadati</taxon>
        <taxon>Pseudomonadota</taxon>
        <taxon>Alphaproteobacteria</taxon>
        <taxon>Acetobacterales</taxon>
        <taxon>Acidocellaceae</taxon>
        <taxon>Acidiphilium</taxon>
    </lineage>
</organism>
<name>FENR_ACICJ</name>
<protein>
    <recommendedName>
        <fullName evidence="1">Ferredoxin--NADP reductase</fullName>
        <shortName evidence="1">FNR</shortName>
        <shortName evidence="1">Fd-NADP(+) reductase</shortName>
        <ecNumber evidence="1">1.18.1.2</ecNumber>
    </recommendedName>
</protein>
<accession>A5FYH8</accession>
<evidence type="ECO:0000255" key="1">
    <source>
        <dbReference type="HAMAP-Rule" id="MF_01685"/>
    </source>
</evidence>
<reference key="1">
    <citation type="submission" date="2007-05" db="EMBL/GenBank/DDBJ databases">
        <title>Complete sequence of chromosome of Acidiphilium cryptum JF-5.</title>
        <authorList>
            <consortium name="US DOE Joint Genome Institute"/>
            <person name="Copeland A."/>
            <person name="Lucas S."/>
            <person name="Lapidus A."/>
            <person name="Barry K."/>
            <person name="Detter J.C."/>
            <person name="Glavina del Rio T."/>
            <person name="Hammon N."/>
            <person name="Israni S."/>
            <person name="Dalin E."/>
            <person name="Tice H."/>
            <person name="Pitluck S."/>
            <person name="Sims D."/>
            <person name="Brettin T."/>
            <person name="Bruce D."/>
            <person name="Han C."/>
            <person name="Schmutz J."/>
            <person name="Larimer F."/>
            <person name="Land M."/>
            <person name="Hauser L."/>
            <person name="Kyrpides N."/>
            <person name="Kim E."/>
            <person name="Magnuson T."/>
            <person name="Richardson P."/>
        </authorList>
    </citation>
    <scope>NUCLEOTIDE SEQUENCE [LARGE SCALE GENOMIC DNA]</scope>
    <source>
        <strain>JF-5</strain>
    </source>
</reference>
<sequence length="339" mass="35089">MAETITTDVAIIGAGPAGLFAVFECGMLKLGTVLIDALGEVGGQCAALYPEKPIYDIPALPAIEAAGLIENLERQIAPFAAPRLLGRLVTAISGSSGDFTIGTDLGDIVRAKAIIIAAGAGAFGPNRPPLEGLAAYEASGAVQYYVKRREALRGKRVVIAGGGDSAVDWALALCGIASSIAVVHRRPKFRAAPESAAQLAEAAARGDIDLVIPYQLHALHGADGALRTVEVADLDGATRHLEADVLLPFFGLATDLGPVATWGLELSLHHVLVTPSTCETSTRGIFAIGDVAQYPGKLKLILQGFSEAAMAAHAIHPIVHPDEALHFEYSTSKGVPGTA</sequence>